<gene>
    <name type="primary">ELI3</name>
</gene>
<feature type="chain" id="PRO_0000160813" description="Probable mannitol dehydrogenase">
    <location>
        <begin position="1"/>
        <end position="361"/>
    </location>
</feature>
<feature type="binding site" evidence="1">
    <location>
        <position position="51"/>
    </location>
    <ligand>
        <name>Zn(2+)</name>
        <dbReference type="ChEBI" id="CHEBI:29105"/>
        <label>1</label>
        <note>catalytic</note>
    </ligand>
</feature>
<feature type="binding site" evidence="1">
    <location>
        <position position="73"/>
    </location>
    <ligand>
        <name>Zn(2+)</name>
        <dbReference type="ChEBI" id="CHEBI:29105"/>
        <label>1</label>
        <note>catalytic</note>
    </ligand>
</feature>
<feature type="binding site" evidence="1">
    <location>
        <position position="104"/>
    </location>
    <ligand>
        <name>Zn(2+)</name>
        <dbReference type="ChEBI" id="CHEBI:29105"/>
        <label>2</label>
    </ligand>
</feature>
<feature type="binding site" evidence="1">
    <location>
        <position position="107"/>
    </location>
    <ligand>
        <name>Zn(2+)</name>
        <dbReference type="ChEBI" id="CHEBI:29105"/>
        <label>2</label>
    </ligand>
</feature>
<feature type="binding site" evidence="1">
    <location>
        <position position="110"/>
    </location>
    <ligand>
        <name>Zn(2+)</name>
        <dbReference type="ChEBI" id="CHEBI:29105"/>
        <label>2</label>
    </ligand>
</feature>
<feature type="binding site" evidence="1">
    <location>
        <position position="118"/>
    </location>
    <ligand>
        <name>Zn(2+)</name>
        <dbReference type="ChEBI" id="CHEBI:29105"/>
        <label>2</label>
    </ligand>
</feature>
<feature type="binding site" evidence="1">
    <location>
        <position position="167"/>
    </location>
    <ligand>
        <name>Zn(2+)</name>
        <dbReference type="ChEBI" id="CHEBI:29105"/>
        <label>1</label>
        <note>catalytic</note>
    </ligand>
</feature>
<sequence length="361" mass="39068">MANSAPENVHPQKAFGWAARDTSGTLSPLKFSRRATGEQDVTFKVLYCGICHSDLHYIKNEWGNAVYPAIPGHEIVGVVTEVGNKVQNFKVGDKVGVGCMVGSCRSCESCENHLENYCPKMILTYGSTYYDGTLTYGGYSDIMVVEEHFAVRIPDNMALDATAPLLCAGVTVYSPLKHFELDKPGLHIGVVGLGGLGHMAVKFGKAFGAKVTVISTSPNKKDEAVNRLGADSFVVSREPEQMQSAMGTLDGIIDTVSAAHPLLPLLGLLKSQGKMIMVGVPDKPLELPVFPLLQGRKILAGSCIGGMKETQEMIDFAAKHDIKSDIEVVPMDYVNTAMERLLKGDVRYRFVIDVANTLKAE</sequence>
<keyword id="KW-0479">Metal-binding</keyword>
<keyword id="KW-0520">NAD</keyword>
<keyword id="KW-0560">Oxidoreductase</keyword>
<keyword id="KW-0862">Zinc</keyword>
<protein>
    <recommendedName>
        <fullName>Probable mannitol dehydrogenase</fullName>
        <ecNumber>1.1.1.255</ecNumber>
    </recommendedName>
    <alternativeName>
        <fullName>NAD-dependent mannitol dehydrogenase</fullName>
    </alternativeName>
</protein>
<name>MTDH_MESCR</name>
<organism>
    <name type="scientific">Mesembryanthemum crystallinum</name>
    <name type="common">Common ice plant</name>
    <name type="synonym">Cryophytum crystallinum</name>
    <dbReference type="NCBI Taxonomy" id="3544"/>
    <lineage>
        <taxon>Eukaryota</taxon>
        <taxon>Viridiplantae</taxon>
        <taxon>Streptophyta</taxon>
        <taxon>Embryophyta</taxon>
        <taxon>Tracheophyta</taxon>
        <taxon>Spermatophyta</taxon>
        <taxon>Magnoliopsida</taxon>
        <taxon>eudicotyledons</taxon>
        <taxon>Gunneridae</taxon>
        <taxon>Pentapetalae</taxon>
        <taxon>Caryophyllales</taxon>
        <taxon>Aizoaceae</taxon>
        <taxon>Mesembryanthemum</taxon>
        <taxon>Mesembryanthemum subgen. Cryophytum</taxon>
    </lineage>
</organism>
<dbReference type="EC" id="1.1.1.255"/>
<dbReference type="EMBL" id="U79770">
    <property type="protein sequence ID" value="AAB38503.1"/>
    <property type="molecule type" value="mRNA"/>
</dbReference>
<dbReference type="PIR" id="T12571">
    <property type="entry name" value="T12571"/>
</dbReference>
<dbReference type="SMR" id="P93257"/>
<dbReference type="GO" id="GO:0046029">
    <property type="term" value="F:mannitol dehydrogenase activity"/>
    <property type="evidence" value="ECO:0007669"/>
    <property type="project" value="UniProtKB-EC"/>
</dbReference>
<dbReference type="GO" id="GO:0008270">
    <property type="term" value="F:zinc ion binding"/>
    <property type="evidence" value="ECO:0007669"/>
    <property type="project" value="InterPro"/>
</dbReference>
<dbReference type="CDD" id="cd05283">
    <property type="entry name" value="CAD1"/>
    <property type="match status" value="1"/>
</dbReference>
<dbReference type="FunFam" id="3.40.50.720:FF:000022">
    <property type="entry name" value="Cinnamyl alcohol dehydrogenase"/>
    <property type="match status" value="1"/>
</dbReference>
<dbReference type="FunFam" id="3.90.180.10:FF:000100">
    <property type="entry name" value="Putative cinnamyl alcohol dehydrogenase 6"/>
    <property type="match status" value="1"/>
</dbReference>
<dbReference type="FunFam" id="3.90.180.10:FF:000126">
    <property type="entry name" value="Uncharacterized protein"/>
    <property type="match status" value="1"/>
</dbReference>
<dbReference type="Gene3D" id="3.90.180.10">
    <property type="entry name" value="Medium-chain alcohol dehydrogenases, catalytic domain"/>
    <property type="match status" value="1"/>
</dbReference>
<dbReference type="Gene3D" id="3.40.50.720">
    <property type="entry name" value="NAD(P)-binding Rossmann-like Domain"/>
    <property type="match status" value="1"/>
</dbReference>
<dbReference type="InterPro" id="IPR013149">
    <property type="entry name" value="ADH-like_C"/>
</dbReference>
<dbReference type="InterPro" id="IPR013154">
    <property type="entry name" value="ADH-like_N"/>
</dbReference>
<dbReference type="InterPro" id="IPR002328">
    <property type="entry name" value="ADH_Zn_CS"/>
</dbReference>
<dbReference type="InterPro" id="IPR047109">
    <property type="entry name" value="CAD-like"/>
</dbReference>
<dbReference type="InterPro" id="IPR011032">
    <property type="entry name" value="GroES-like_sf"/>
</dbReference>
<dbReference type="InterPro" id="IPR036291">
    <property type="entry name" value="NAD(P)-bd_dom_sf"/>
</dbReference>
<dbReference type="InterPro" id="IPR020843">
    <property type="entry name" value="PKS_ER"/>
</dbReference>
<dbReference type="PANTHER" id="PTHR42683">
    <property type="entry name" value="ALDEHYDE REDUCTASE"/>
    <property type="match status" value="1"/>
</dbReference>
<dbReference type="Pfam" id="PF08240">
    <property type="entry name" value="ADH_N"/>
    <property type="match status" value="1"/>
</dbReference>
<dbReference type="Pfam" id="PF00107">
    <property type="entry name" value="ADH_zinc_N"/>
    <property type="match status" value="1"/>
</dbReference>
<dbReference type="SMART" id="SM00829">
    <property type="entry name" value="PKS_ER"/>
    <property type="match status" value="1"/>
</dbReference>
<dbReference type="SUPFAM" id="SSF50129">
    <property type="entry name" value="GroES-like"/>
    <property type="match status" value="1"/>
</dbReference>
<dbReference type="SUPFAM" id="SSF51735">
    <property type="entry name" value="NAD(P)-binding Rossmann-fold domains"/>
    <property type="match status" value="1"/>
</dbReference>
<dbReference type="PROSITE" id="PS00059">
    <property type="entry name" value="ADH_ZINC"/>
    <property type="match status" value="1"/>
</dbReference>
<comment type="function">
    <text evidence="1">Oxidizes mannitol to mannose. Provides the initial step by which translocated mannitol is committed to central metabolism and, by regulating mannitol pool size, is important in regulating salt tolerance at the cellular level (By similarity).</text>
</comment>
<comment type="catalytic activity">
    <reaction>
        <text>D-mannitol + NAD(+) = D-mannose + NADH + H(+)</text>
        <dbReference type="Rhea" id="RHEA:15029"/>
        <dbReference type="ChEBI" id="CHEBI:4208"/>
        <dbReference type="ChEBI" id="CHEBI:15378"/>
        <dbReference type="ChEBI" id="CHEBI:16899"/>
        <dbReference type="ChEBI" id="CHEBI:57540"/>
        <dbReference type="ChEBI" id="CHEBI:57945"/>
        <dbReference type="EC" id="1.1.1.255"/>
    </reaction>
</comment>
<comment type="cofactor">
    <cofactor evidence="1">
        <name>Zn(2+)</name>
        <dbReference type="ChEBI" id="CHEBI:29105"/>
    </cofactor>
    <text evidence="1">Binds 2 Zn(2+) ions per subunit.</text>
</comment>
<comment type="similarity">
    <text evidence="2">Belongs to the zinc-containing alcohol dehydrogenase family.</text>
</comment>
<comment type="caution">
    <text evidence="2">Was originally (Ref.1) thought to be a cinnamyl-alcohol dehydrogenase.</text>
</comment>
<evidence type="ECO:0000250" key="1"/>
<evidence type="ECO:0000305" key="2"/>
<reference key="1">
    <citation type="submission" date="1996-11" db="EMBL/GenBank/DDBJ databases">
        <authorList>
            <person name="Michalowski C.B."/>
            <person name="Bohnert H.J."/>
        </authorList>
    </citation>
    <scope>NUCLEOTIDE SEQUENCE [MRNA]</scope>
</reference>
<accession>P93257</accession>
<proteinExistence type="evidence at transcript level"/>